<name>VP2_ROTB2</name>
<accession>A9Q1K8</accession>
<dbReference type="EMBL" id="EF453356">
    <property type="protein sequence ID" value="ABR32123.1"/>
    <property type="molecule type" value="mRNA"/>
</dbReference>
<dbReference type="SMR" id="A9Q1K8"/>
<dbReference type="Proteomes" id="UP000174021">
    <property type="component" value="Genome"/>
</dbReference>
<dbReference type="GO" id="GO:0039616">
    <property type="term" value="C:T=2 icosahedral viral capsid"/>
    <property type="evidence" value="ECO:0007669"/>
    <property type="project" value="UniProtKB-UniRule"/>
</dbReference>
<dbReference type="GO" id="GO:0039625">
    <property type="term" value="C:viral inner capsid"/>
    <property type="evidence" value="ECO:0007669"/>
    <property type="project" value="UniProtKB-UniRule"/>
</dbReference>
<dbReference type="GO" id="GO:0019013">
    <property type="term" value="C:viral nucleocapsid"/>
    <property type="evidence" value="ECO:0007669"/>
    <property type="project" value="UniProtKB-UniRule"/>
</dbReference>
<dbReference type="GO" id="GO:0003723">
    <property type="term" value="F:RNA binding"/>
    <property type="evidence" value="ECO:0007669"/>
    <property type="project" value="UniProtKB-UniRule"/>
</dbReference>
<dbReference type="HAMAP" id="MF_04123">
    <property type="entry name" value="Rota_VP2"/>
    <property type="match status" value="1"/>
</dbReference>
<dbReference type="InterPro" id="IPR007779">
    <property type="entry name" value="Rotavirus_VP2"/>
</dbReference>
<evidence type="ECO:0000255" key="1">
    <source>
        <dbReference type="HAMAP-Rule" id="MF_04123"/>
    </source>
</evidence>
<protein>
    <recommendedName>
        <fullName evidence="1">Inner capsid protein VP2</fullName>
    </recommendedName>
</protein>
<organismHost>
    <name type="scientific">Homo sapiens</name>
    <name type="common">Human</name>
    <dbReference type="NCBI Taxonomy" id="9606"/>
</organismHost>
<reference key="1">
    <citation type="journal article" date="2008" name="J. Med. Virol.">
        <title>Whole genomic characterization of a human rotavirus strain B219 belonging to a novel group of the genus Rotavirus.</title>
        <authorList>
            <person name="Nagashima S."/>
            <person name="Kobayashi N."/>
            <person name="Ishino M."/>
            <person name="Alam M.M."/>
            <person name="Ahmed M.U."/>
            <person name="Paul S.K."/>
            <person name="Ganesh B."/>
            <person name="Chawla-Sarkar M."/>
            <person name="Krishnan T."/>
            <person name="Naik T.N."/>
            <person name="Wang Y.-H."/>
        </authorList>
    </citation>
    <scope>NUCLEOTIDE SEQUENCE [MRNA]</scope>
</reference>
<keyword id="KW-0167">Capsid protein</keyword>
<keyword id="KW-1153">Inner capsid protein</keyword>
<keyword id="KW-0694">RNA-binding</keyword>
<keyword id="KW-1141">T=2 icosahedral capsid protein</keyword>
<keyword id="KW-0946">Virion</keyword>
<sequence length="973" mass="111085">MEVIEKLETIRETLNDTKDKKDFQKIHDELVQYLDGVDSLTIDDDKWNEILKLFKTIIIKLKSSTIKTTPLENELLQHEKKRTVKEVEKVEEDIKTDVTNDTSKPTLMDKVLQVSNQPNNPYSADVLQIRTILSKTLFVDTDSEAYSLYVPESQKLDVSPITIELTTIEKYQPKVNILKQAVIVPSQNPLLADTYGAPEILFSTDFFDDITSNSSEGLQLYFFDKAYKLKKELPNLPFLSSLDKDVNPLNPLNSVCKSFGQEKYYDMVMDRTDRGLDARRAAMQFDNVIVDAQNRTVQFNVRMHPFDLQLLRISQQFAEPMQDLAPVVREYMMLGADGYVLTQKIRLDRDQQLIANRRSVVFDRMCELSGPLYRSRIIHSMRMMSKLWRTNVFRTSLEDEITKIYAAAEVSMISIDATTSALSTINIASAEQTLNALLNMSFFRCELDLIGSQSSFGAAMSAMIALMILPTDQENMDDEVFDVLCNLVYNELIAWAADRPVFVRRAGATNAFRQFVNAGLNRDITNYMRFVLLRRPWLPLYNSRDVRRNAHVLVPNVDLANINDQVYVAINSFLNGIIEASRRNPNPNKTISANSFRKLMKNMRDICVNRLMPVIRLIRYNVERIGMILHMLPYSADIFDINRNLRDERLRIKIPMSGFLSLVMGITKAPDAFDWSQILNFADDVRKMDYAEAISIEDSASVAIMRNDANRATSKKEIFISEVRPPTPTVASIQKIPSATLTAIFSDRQLINLIRDTHSFRVIREIAVALQAAFDNSPTSQHGVGKGAVLHPVPQNFGRSSQFVRRDNILLQRPAGIQQFTIEDLKQGRYFQGLMAQIRARQPIIVNGPIPLRISDAAEIEQVTLAFLTMNSPYDAYIDPRDLKQQKLLTDREVDLFIDQSPARPNDEFDNVMARTSVFIIDAPRAIVPINPQRLNFPYHDIMVTDSVTKFIEFTVALTPDLQLFNGLLVFEQ</sequence>
<feature type="chain" id="PRO_0000369834" description="Inner capsid protein VP2">
    <location>
        <begin position="1"/>
        <end position="973"/>
    </location>
</feature>
<proteinExistence type="evidence at transcript level"/>
<comment type="function">
    <text evidence="1">Inner capsid protein that self-assembles to form an icosahedral capsid with a T=2 symmetry, which consists of 120 copies of VP2, with channels at each of its five-fold vertices. This capsid constitutes the innermost concentric layer of the viral mature particle. It encapsidates the polymerase VP1, the capping enzyme VP3 and the genomic dsRNA, thereby defining the core. The innermost VP2 capsid and the intermediate VP6 capsid remain intact following cell entry to protect the dsRNA from degradation and to prevent unfavorable antiviral responses in the host cell during all the replication cycle of the virus. Nascent transcripts are transcribed within the structural confines of this double-layered particle (DLP) and are extruded through the channels formed by VP2 N-termini. VP2 is required for the replicase activity of VP1 polymerase. Probably recruits a copy of a VP1-VP3 complex, potentially along with a segment of plus-strand RNA, as a decamer of VP2 assembles. May activate the autoinhibited VP1/RNA complex to coordinate packaging and genome replication.</text>
</comment>
<comment type="subunit">
    <text evidence="1">Homodecamer; each decamer is made up of two conformers of VP2, called VP2A and VP2B. Interacts with a VP1-VP3 complex. Interacts with the intermediate capsid protein VP6. Interacts with NSP5. Interacts (via N-terminus) with NSP2.</text>
</comment>
<comment type="subcellular location">
    <subcellularLocation>
        <location evidence="1">Virion</location>
    </subcellularLocation>
    <text evidence="1">Inner capsid protein. Also found in spherical cytoplasmic structures, called virus factories, that appear early after infection and are the site of viral replication and packaging.</text>
</comment>
<comment type="similarity">
    <text evidence="1">Belongs to the rotavirus VP2 family.</text>
</comment>
<organism>
    <name type="scientific">Rotavirus X (isolate RVX/Human/Bangladesh/NADRV-B219/2002/GXP[X])</name>
    <name type="common">RV ADRV-N</name>
    <name type="synonym">Rotavirus (isolate novel adult diarrhea rotavirus-B219)</name>
    <dbReference type="NCBI Taxonomy" id="348136"/>
    <lineage>
        <taxon>Viruses</taxon>
        <taxon>Riboviria</taxon>
        <taxon>Orthornavirae</taxon>
        <taxon>Duplornaviricota</taxon>
        <taxon>Resentoviricetes</taxon>
        <taxon>Reovirales</taxon>
        <taxon>Sedoreoviridae</taxon>
        <taxon>Rotavirus</taxon>
    </lineage>
</organism>